<feature type="chain" id="PRO_0000257761" description="Cobalt-precorrin-5B C(1)-methyltransferase">
    <location>
        <begin position="1"/>
        <end position="362"/>
    </location>
</feature>
<gene>
    <name evidence="1" type="primary">cbiD</name>
    <name type="ordered locus">DP0220</name>
</gene>
<protein>
    <recommendedName>
        <fullName evidence="1">Cobalt-precorrin-5B C(1)-methyltransferase</fullName>
        <ecNumber evidence="1">2.1.1.195</ecNumber>
    </recommendedName>
    <alternativeName>
        <fullName evidence="1">Cobalt-precorrin-6A synthase</fullName>
    </alternativeName>
</protein>
<organism>
    <name type="scientific">Desulfotalea psychrophila (strain LSv54 / DSM 12343)</name>
    <dbReference type="NCBI Taxonomy" id="177439"/>
    <lineage>
        <taxon>Bacteria</taxon>
        <taxon>Pseudomonadati</taxon>
        <taxon>Thermodesulfobacteriota</taxon>
        <taxon>Desulfobulbia</taxon>
        <taxon>Desulfobulbales</taxon>
        <taxon>Desulfocapsaceae</taxon>
        <taxon>Desulfotalea</taxon>
    </lineage>
</organism>
<comment type="function">
    <text evidence="1">Catalyzes the methylation of C-1 in cobalt-precorrin-5B to form cobalt-precorrin-6A.</text>
</comment>
<comment type="catalytic activity">
    <reaction evidence="1">
        <text>Co-precorrin-5B + S-adenosyl-L-methionine = Co-precorrin-6A + S-adenosyl-L-homocysteine</text>
        <dbReference type="Rhea" id="RHEA:26285"/>
        <dbReference type="ChEBI" id="CHEBI:57856"/>
        <dbReference type="ChEBI" id="CHEBI:59789"/>
        <dbReference type="ChEBI" id="CHEBI:60063"/>
        <dbReference type="ChEBI" id="CHEBI:60064"/>
        <dbReference type="EC" id="2.1.1.195"/>
    </reaction>
</comment>
<comment type="pathway">
    <text evidence="1">Cofactor biosynthesis; adenosylcobalamin biosynthesis; cob(II)yrinate a,c-diamide from sirohydrochlorin (anaerobic route): step 6/10.</text>
</comment>
<comment type="similarity">
    <text evidence="1">Belongs to the CbiD family.</text>
</comment>
<keyword id="KW-0169">Cobalamin biosynthesis</keyword>
<keyword id="KW-0489">Methyltransferase</keyword>
<keyword id="KW-1185">Reference proteome</keyword>
<keyword id="KW-0949">S-adenosyl-L-methionine</keyword>
<keyword id="KW-0808">Transferase</keyword>
<reference key="1">
    <citation type="journal article" date="2004" name="Environ. Microbiol.">
        <title>The genome of Desulfotalea psychrophila, a sulfate-reducing bacterium from permanently cold Arctic sediments.</title>
        <authorList>
            <person name="Rabus R."/>
            <person name="Ruepp A."/>
            <person name="Frickey T."/>
            <person name="Rattei T."/>
            <person name="Fartmann B."/>
            <person name="Stark M."/>
            <person name="Bauer M."/>
            <person name="Zibat A."/>
            <person name="Lombardot T."/>
            <person name="Becker I."/>
            <person name="Amann J."/>
            <person name="Gellner K."/>
            <person name="Teeling H."/>
            <person name="Leuschner W.D."/>
            <person name="Gloeckner F.-O."/>
            <person name="Lupas A.N."/>
            <person name="Amann R."/>
            <person name="Klenk H.-P."/>
        </authorList>
    </citation>
    <scope>NUCLEOTIDE SEQUENCE [LARGE SCALE GENOMIC DNA]</scope>
    <source>
        <strain>DSM 12343 / LSv54</strain>
    </source>
</reference>
<name>CBID_DESPS</name>
<proteinExistence type="inferred from homology"/>
<sequence length="362" mass="38766">MSKAYKRPLRSGYTTGACAAAVAKGATILLLSGEAPEKVEIPFPDGSRHSFCLSQQDGTGACMGTIKDAGDDPDVTNGALILATASWEGEDGPTCVHLTEIRLCGGDGVGQVSKRGLSIAPGEPAINPVPRQMIEAAVAEALSQHEKRKLTITISVPQGLELAEKTLNHRLGIVNGISILGTTGIVRPISASAWKATISACMDVARSAGLEQMVISTGRTSEKGAQQLLDLPEEAYAMMGDYLQFSLEEAGRKGFSTIHYAGMWAKIIKAALEVPQTHVRNGALEVEAAAQLLKKLGADEELCKKLFAANTAREMLSHLEDEGRDDLVKAVCQYAKKYAEKISEKTVHIYLINHRAEVIHYE</sequence>
<dbReference type="EC" id="2.1.1.195" evidence="1"/>
<dbReference type="EMBL" id="CR522870">
    <property type="protein sequence ID" value="CAG34949.1"/>
    <property type="molecule type" value="Genomic_DNA"/>
</dbReference>
<dbReference type="RefSeq" id="WP_011187465.1">
    <property type="nucleotide sequence ID" value="NC_006138.1"/>
</dbReference>
<dbReference type="SMR" id="Q6ARS6"/>
<dbReference type="STRING" id="177439.DP0220"/>
<dbReference type="KEGG" id="dps:DP0220"/>
<dbReference type="eggNOG" id="COG1903">
    <property type="taxonomic scope" value="Bacteria"/>
</dbReference>
<dbReference type="HOGENOM" id="CLU_041273_0_0_7"/>
<dbReference type="OrthoDB" id="6439987at2"/>
<dbReference type="UniPathway" id="UPA00148">
    <property type="reaction ID" value="UER00227"/>
</dbReference>
<dbReference type="Proteomes" id="UP000000602">
    <property type="component" value="Chromosome"/>
</dbReference>
<dbReference type="GO" id="GO:0043780">
    <property type="term" value="F:cobalt-precorrin-5B C1-methyltransferase activity"/>
    <property type="evidence" value="ECO:0007669"/>
    <property type="project" value="RHEA"/>
</dbReference>
<dbReference type="GO" id="GO:0019251">
    <property type="term" value="P:anaerobic cobalamin biosynthetic process"/>
    <property type="evidence" value="ECO:0007669"/>
    <property type="project" value="UniProtKB-UniRule"/>
</dbReference>
<dbReference type="GO" id="GO:0032259">
    <property type="term" value="P:methylation"/>
    <property type="evidence" value="ECO:0007669"/>
    <property type="project" value="UniProtKB-KW"/>
</dbReference>
<dbReference type="Gene3D" id="3.30.2110.10">
    <property type="entry name" value="CbiD-like"/>
    <property type="match status" value="1"/>
</dbReference>
<dbReference type="HAMAP" id="MF_00787">
    <property type="entry name" value="CbiD"/>
    <property type="match status" value="1"/>
</dbReference>
<dbReference type="InterPro" id="IPR002748">
    <property type="entry name" value="CbiD"/>
</dbReference>
<dbReference type="InterPro" id="IPR036074">
    <property type="entry name" value="CbiD_sf"/>
</dbReference>
<dbReference type="NCBIfam" id="TIGR00312">
    <property type="entry name" value="cbiD"/>
    <property type="match status" value="1"/>
</dbReference>
<dbReference type="NCBIfam" id="NF000849">
    <property type="entry name" value="PRK00075.1-1"/>
    <property type="match status" value="1"/>
</dbReference>
<dbReference type="PANTHER" id="PTHR35863">
    <property type="entry name" value="COBALT-PRECORRIN-5B C(1)-METHYLTRANSFERASE"/>
    <property type="match status" value="1"/>
</dbReference>
<dbReference type="PANTHER" id="PTHR35863:SF1">
    <property type="entry name" value="COBALT-PRECORRIN-5B C(1)-METHYLTRANSFERASE"/>
    <property type="match status" value="1"/>
</dbReference>
<dbReference type="Pfam" id="PF01888">
    <property type="entry name" value="CbiD"/>
    <property type="match status" value="1"/>
</dbReference>
<dbReference type="PIRSF" id="PIRSF026782">
    <property type="entry name" value="CbiD"/>
    <property type="match status" value="1"/>
</dbReference>
<dbReference type="SUPFAM" id="SSF111342">
    <property type="entry name" value="CbiD-like"/>
    <property type="match status" value="1"/>
</dbReference>
<evidence type="ECO:0000255" key="1">
    <source>
        <dbReference type="HAMAP-Rule" id="MF_00787"/>
    </source>
</evidence>
<accession>Q6ARS6</accession>